<gene>
    <name evidence="2" type="primary">dkgB</name>
    <name type="ordered locus">STM0255</name>
</gene>
<comment type="function">
    <text evidence="2">Aldo-keto reductase that significantly contributes to cellular methylglyoxal detoxification by catalyzing the NADPH-dependent conversion of methylglyoxal to acetol.</text>
</comment>
<comment type="catalytic activity">
    <reaction evidence="2">
        <text>hydroxyacetone + NADP(+) = methylglyoxal + NADPH + H(+)</text>
        <dbReference type="Rhea" id="RHEA:27986"/>
        <dbReference type="ChEBI" id="CHEBI:15378"/>
        <dbReference type="ChEBI" id="CHEBI:17158"/>
        <dbReference type="ChEBI" id="CHEBI:27957"/>
        <dbReference type="ChEBI" id="CHEBI:57783"/>
        <dbReference type="ChEBI" id="CHEBI:58349"/>
    </reaction>
</comment>
<comment type="subunit">
    <text evidence="2">Monomer.</text>
</comment>
<comment type="subcellular location">
    <subcellularLocation>
        <location evidence="3">Cytoplasm</location>
    </subcellularLocation>
</comment>
<comment type="similarity">
    <text evidence="3">Belongs to the aldo/keto reductase family.</text>
</comment>
<sequence>MTIPAFGLGTFRLKDDVVIASVKTALELGYRAVDTAQIYDNEAAVGQAIAESGVPRNELYITTKIWIENLSKDKLIPSLKESLKKLRTDYVDLTLIHWPSPGDAVSVEEFMQALLEAKKQGLTREIGISNFTIPLMEKAIAAVGADNIATNQIELSPYLQNRKVVDWAKAHGIHITSYMTLAYGKALKDEVIARIAAKHNATPAQVILAWAMGEGYSVIPSSTRRENLASSLLAQDLHLDAEDKNAIAALDCNDRLVSPEGLAPAWD</sequence>
<name>DKGB_SALTY</name>
<feature type="chain" id="PRO_0000124607" description="Methylglyoxal reductase DkgB">
    <location>
        <begin position="1"/>
        <end position="267"/>
    </location>
</feature>
<feature type="active site" description="Proton donor" evidence="1">
    <location>
        <position position="39"/>
    </location>
</feature>
<feature type="binding site" evidence="1">
    <location>
        <position position="97"/>
    </location>
    <ligand>
        <name>substrate</name>
    </ligand>
</feature>
<feature type="binding site" evidence="1">
    <location>
        <begin position="179"/>
        <end position="231"/>
    </location>
    <ligand>
        <name>NADP(+)</name>
        <dbReference type="ChEBI" id="CHEBI:58349"/>
    </ligand>
</feature>
<protein>
    <recommendedName>
        <fullName evidence="2">Methylglyoxal reductase DkgB</fullName>
        <ecNumber evidence="2">1.1.1.-</ecNumber>
    </recommendedName>
</protein>
<dbReference type="EC" id="1.1.1.-" evidence="2"/>
<dbReference type="EMBL" id="AE006468">
    <property type="protein sequence ID" value="AAL19212.1"/>
    <property type="molecule type" value="Genomic_DNA"/>
</dbReference>
<dbReference type="RefSeq" id="WP_000154872.1">
    <property type="nucleotide sequence ID" value="NC_003197.2"/>
</dbReference>
<dbReference type="SMR" id="Q8ZRM7"/>
<dbReference type="STRING" id="99287.STM0255"/>
<dbReference type="PaxDb" id="99287-STM0255"/>
<dbReference type="KEGG" id="stm:STM0255"/>
<dbReference type="PATRIC" id="fig|99287.12.peg.264"/>
<dbReference type="HOGENOM" id="CLU_023205_0_1_6"/>
<dbReference type="PhylomeDB" id="Q8ZRM7"/>
<dbReference type="BioCyc" id="SENT99287:STM0255-MONOMER"/>
<dbReference type="Proteomes" id="UP000001014">
    <property type="component" value="Chromosome"/>
</dbReference>
<dbReference type="GO" id="GO:0005737">
    <property type="term" value="C:cytoplasm"/>
    <property type="evidence" value="ECO:0007669"/>
    <property type="project" value="UniProtKB-SubCell"/>
</dbReference>
<dbReference type="GO" id="GO:0004033">
    <property type="term" value="F:aldo-keto reductase (NADPH) activity"/>
    <property type="evidence" value="ECO:0000318"/>
    <property type="project" value="GO_Central"/>
</dbReference>
<dbReference type="GO" id="GO:1990002">
    <property type="term" value="F:methylglyoxal reductase (NADPH) (acetol producing) activity"/>
    <property type="evidence" value="ECO:0000318"/>
    <property type="project" value="GO_Central"/>
</dbReference>
<dbReference type="GO" id="GO:0019853">
    <property type="term" value="P:L-ascorbic acid biosynthetic process"/>
    <property type="evidence" value="ECO:0007669"/>
    <property type="project" value="UniProtKB-KW"/>
</dbReference>
<dbReference type="GO" id="GO:0051596">
    <property type="term" value="P:methylglyoxal catabolic process"/>
    <property type="evidence" value="ECO:0000318"/>
    <property type="project" value="GO_Central"/>
</dbReference>
<dbReference type="CDD" id="cd19139">
    <property type="entry name" value="AKR_AKR3F2"/>
    <property type="match status" value="1"/>
</dbReference>
<dbReference type="FunFam" id="3.20.20.100:FF:000016">
    <property type="entry name" value="2,5-diketo-D-gluconic acid reductase B"/>
    <property type="match status" value="1"/>
</dbReference>
<dbReference type="Gene3D" id="3.20.20.100">
    <property type="entry name" value="NADP-dependent oxidoreductase domain"/>
    <property type="match status" value="1"/>
</dbReference>
<dbReference type="InterPro" id="IPR020471">
    <property type="entry name" value="AKR"/>
</dbReference>
<dbReference type="InterPro" id="IPR018170">
    <property type="entry name" value="Aldo/ket_reductase_CS"/>
</dbReference>
<dbReference type="InterPro" id="IPR023210">
    <property type="entry name" value="NADP_OxRdtase_dom"/>
</dbReference>
<dbReference type="InterPro" id="IPR036812">
    <property type="entry name" value="NADP_OxRdtase_dom_sf"/>
</dbReference>
<dbReference type="NCBIfam" id="NF008377">
    <property type="entry name" value="PRK11172.1"/>
    <property type="match status" value="1"/>
</dbReference>
<dbReference type="PANTHER" id="PTHR43827">
    <property type="entry name" value="2,5-DIKETO-D-GLUCONIC ACID REDUCTASE"/>
    <property type="match status" value="1"/>
</dbReference>
<dbReference type="PANTHER" id="PTHR43827:SF3">
    <property type="entry name" value="NADP-DEPENDENT OXIDOREDUCTASE DOMAIN-CONTAINING PROTEIN"/>
    <property type="match status" value="1"/>
</dbReference>
<dbReference type="Pfam" id="PF00248">
    <property type="entry name" value="Aldo_ket_red"/>
    <property type="match status" value="1"/>
</dbReference>
<dbReference type="PIRSF" id="PIRSF000097">
    <property type="entry name" value="AKR"/>
    <property type="match status" value="1"/>
</dbReference>
<dbReference type="PRINTS" id="PR00069">
    <property type="entry name" value="ALDKETRDTASE"/>
</dbReference>
<dbReference type="SUPFAM" id="SSF51430">
    <property type="entry name" value="NAD(P)-linked oxidoreductase"/>
    <property type="match status" value="1"/>
</dbReference>
<dbReference type="PROSITE" id="PS00798">
    <property type="entry name" value="ALDOKETO_REDUCTASE_1"/>
    <property type="match status" value="1"/>
</dbReference>
<dbReference type="PROSITE" id="PS00062">
    <property type="entry name" value="ALDOKETO_REDUCTASE_2"/>
    <property type="match status" value="1"/>
</dbReference>
<proteinExistence type="inferred from homology"/>
<organism>
    <name type="scientific">Salmonella typhimurium (strain LT2 / SGSC1412 / ATCC 700720)</name>
    <dbReference type="NCBI Taxonomy" id="99287"/>
    <lineage>
        <taxon>Bacteria</taxon>
        <taxon>Pseudomonadati</taxon>
        <taxon>Pseudomonadota</taxon>
        <taxon>Gammaproteobacteria</taxon>
        <taxon>Enterobacterales</taxon>
        <taxon>Enterobacteriaceae</taxon>
        <taxon>Salmonella</taxon>
    </lineage>
</organism>
<evidence type="ECO:0000250" key="1"/>
<evidence type="ECO:0000250" key="2">
    <source>
        <dbReference type="UniProtKB" id="P30863"/>
    </source>
</evidence>
<evidence type="ECO:0000305" key="3"/>
<reference key="1">
    <citation type="journal article" date="2001" name="Nature">
        <title>Complete genome sequence of Salmonella enterica serovar Typhimurium LT2.</title>
        <authorList>
            <person name="McClelland M."/>
            <person name="Sanderson K.E."/>
            <person name="Spieth J."/>
            <person name="Clifton S.W."/>
            <person name="Latreille P."/>
            <person name="Courtney L."/>
            <person name="Porwollik S."/>
            <person name="Ali J."/>
            <person name="Dante M."/>
            <person name="Du F."/>
            <person name="Hou S."/>
            <person name="Layman D."/>
            <person name="Leonard S."/>
            <person name="Nguyen C."/>
            <person name="Scott K."/>
            <person name="Holmes A."/>
            <person name="Grewal N."/>
            <person name="Mulvaney E."/>
            <person name="Ryan E."/>
            <person name="Sun H."/>
            <person name="Florea L."/>
            <person name="Miller W."/>
            <person name="Stoneking T."/>
            <person name="Nhan M."/>
            <person name="Waterston R."/>
            <person name="Wilson R.K."/>
        </authorList>
    </citation>
    <scope>NUCLEOTIDE SEQUENCE [LARGE SCALE GENOMIC DNA]</scope>
    <source>
        <strain>LT2 / SGSC1412 / ATCC 700720</strain>
    </source>
</reference>
<accession>Q8ZRM7</accession>
<keyword id="KW-0963">Cytoplasm</keyword>
<keyword id="KW-0521">NADP</keyword>
<keyword id="KW-0560">Oxidoreductase</keyword>
<keyword id="KW-1185">Reference proteome</keyword>